<comment type="function">
    <text evidence="1">Catalyzes amidations at positions B, D, E, and G on adenosylcobyrinic A,C-diamide. NH(2) groups are provided by glutamine, and one molecule of ATP is hydrogenolyzed for each amidation.</text>
</comment>
<comment type="pathway">
    <text evidence="1">Cofactor biosynthesis; adenosylcobalamin biosynthesis.</text>
</comment>
<comment type="similarity">
    <text evidence="1">Belongs to the CobB/CobQ family. CobQ subfamily.</text>
</comment>
<gene>
    <name evidence="1" type="primary">cobQ</name>
    <name type="ordered locus">Saro_0323</name>
</gene>
<reference key="1">
    <citation type="submission" date="2006-01" db="EMBL/GenBank/DDBJ databases">
        <title>Complete sequence of Novosphingobium aromaticivorans DSM 12444.</title>
        <authorList>
            <consortium name="US DOE Joint Genome Institute"/>
            <person name="Copeland A."/>
            <person name="Lucas S."/>
            <person name="Lapidus A."/>
            <person name="Barry K."/>
            <person name="Detter J.C."/>
            <person name="Glavina T."/>
            <person name="Hammon N."/>
            <person name="Israni S."/>
            <person name="Pitluck S."/>
            <person name="Chain P."/>
            <person name="Malfatti S."/>
            <person name="Shin M."/>
            <person name="Vergez L."/>
            <person name="Schmutz J."/>
            <person name="Larimer F."/>
            <person name="Land M."/>
            <person name="Kyrpides N."/>
            <person name="Ivanova N."/>
            <person name="Fredrickson J."/>
            <person name="Balkwill D."/>
            <person name="Romine M.F."/>
            <person name="Richardson P."/>
        </authorList>
    </citation>
    <scope>NUCLEOTIDE SEQUENCE [LARGE SCALE GENOMIC DNA]</scope>
    <source>
        <strain>ATCC 700278 / DSM 12444 / CCUG 56034 / CIP 105152 / NBRC 16084 / F199</strain>
    </source>
</reference>
<sequence length="491" mass="51104">MLQGTGSDVGKSVLVAGLCRALVQRGLRVLPFKPQNMSNNAAVTSDGGEIGRAQALQAIACKVEPHTDMNPVLLKPQADRTSQLIVHGRVRGTLGAGNFRQARGALLGEVLASYNRLRRACDIVVVEGAGSPAEINLRAGDIANMGFARAAGVPVVLVGDIDRGGVIAAIVGTRTIIDPADTAMIQGFIINKFRGDPALFADGYAQIESLSGWRGFGVVPWLSAAARLPSEDAVVLESGKARAESRKLIACPILPRISNFDDLDPLKLEHGVDLHMVPPGQPIPAEAALIILPGSKSTIADLAALRAEGWDIDIFAHHRRGGLILGLCGGYQMLGKSIADPDGFEGSASAASGLGLLDVETTLHAHKALRPVSGLAMGAPFQGYEMHMGQTNGPDTEQPFAVFADGRRDGAINAGGTVFGSYVHGLLADAELRRALLSRMDVEAGGVDYGASVEAALDEIAAALEEHLDIDALVALAMAERPASVPAGDSA</sequence>
<accession>Q2GBK2</accession>
<organism>
    <name type="scientific">Novosphingobium aromaticivorans (strain ATCC 700278 / DSM 12444 / CCUG 56034 / CIP 105152 / NBRC 16084 / F199)</name>
    <dbReference type="NCBI Taxonomy" id="279238"/>
    <lineage>
        <taxon>Bacteria</taxon>
        <taxon>Pseudomonadati</taxon>
        <taxon>Pseudomonadota</taxon>
        <taxon>Alphaproteobacteria</taxon>
        <taxon>Sphingomonadales</taxon>
        <taxon>Sphingomonadaceae</taxon>
        <taxon>Novosphingobium</taxon>
    </lineage>
</organism>
<name>COBQ_NOVAD</name>
<protein>
    <recommendedName>
        <fullName evidence="1">Cobyric acid synthase</fullName>
    </recommendedName>
</protein>
<proteinExistence type="inferred from homology"/>
<keyword id="KW-0169">Cobalamin biosynthesis</keyword>
<keyword id="KW-0315">Glutamine amidotransferase</keyword>
<keyword id="KW-1185">Reference proteome</keyword>
<evidence type="ECO:0000255" key="1">
    <source>
        <dbReference type="HAMAP-Rule" id="MF_00028"/>
    </source>
</evidence>
<dbReference type="EMBL" id="CP000248">
    <property type="protein sequence ID" value="ABD24771.1"/>
    <property type="molecule type" value="Genomic_DNA"/>
</dbReference>
<dbReference type="SMR" id="Q2GBK2"/>
<dbReference type="STRING" id="279238.Saro_0323"/>
<dbReference type="KEGG" id="nar:Saro_0323"/>
<dbReference type="eggNOG" id="COG1492">
    <property type="taxonomic scope" value="Bacteria"/>
</dbReference>
<dbReference type="HOGENOM" id="CLU_019250_2_2_5"/>
<dbReference type="UniPathway" id="UPA00148"/>
<dbReference type="Proteomes" id="UP000009134">
    <property type="component" value="Chromosome"/>
</dbReference>
<dbReference type="GO" id="GO:0015420">
    <property type="term" value="F:ABC-type vitamin B12 transporter activity"/>
    <property type="evidence" value="ECO:0007669"/>
    <property type="project" value="UniProtKB-UniRule"/>
</dbReference>
<dbReference type="GO" id="GO:0003824">
    <property type="term" value="F:catalytic activity"/>
    <property type="evidence" value="ECO:0007669"/>
    <property type="project" value="InterPro"/>
</dbReference>
<dbReference type="GO" id="GO:0009236">
    <property type="term" value="P:cobalamin biosynthetic process"/>
    <property type="evidence" value="ECO:0007669"/>
    <property type="project" value="UniProtKB-UniRule"/>
</dbReference>
<dbReference type="CDD" id="cd05389">
    <property type="entry name" value="CobQ_N"/>
    <property type="match status" value="1"/>
</dbReference>
<dbReference type="CDD" id="cd01750">
    <property type="entry name" value="GATase1_CobQ"/>
    <property type="match status" value="1"/>
</dbReference>
<dbReference type="Gene3D" id="3.40.50.880">
    <property type="match status" value="1"/>
</dbReference>
<dbReference type="Gene3D" id="3.40.50.300">
    <property type="entry name" value="P-loop containing nucleotide triphosphate hydrolases"/>
    <property type="match status" value="1"/>
</dbReference>
<dbReference type="HAMAP" id="MF_00028">
    <property type="entry name" value="CobQ"/>
    <property type="match status" value="1"/>
</dbReference>
<dbReference type="InterPro" id="IPR029062">
    <property type="entry name" value="Class_I_gatase-like"/>
</dbReference>
<dbReference type="InterPro" id="IPR002586">
    <property type="entry name" value="CobQ/CobB/MinD/ParA_Nub-bd_dom"/>
</dbReference>
<dbReference type="InterPro" id="IPR033949">
    <property type="entry name" value="CobQ_GATase1"/>
</dbReference>
<dbReference type="InterPro" id="IPR047045">
    <property type="entry name" value="CobQ_N"/>
</dbReference>
<dbReference type="InterPro" id="IPR004459">
    <property type="entry name" value="CobQ_synth"/>
</dbReference>
<dbReference type="InterPro" id="IPR011698">
    <property type="entry name" value="GATase_3"/>
</dbReference>
<dbReference type="InterPro" id="IPR027417">
    <property type="entry name" value="P-loop_NTPase"/>
</dbReference>
<dbReference type="NCBIfam" id="TIGR00313">
    <property type="entry name" value="cobQ"/>
    <property type="match status" value="1"/>
</dbReference>
<dbReference type="NCBIfam" id="NF001989">
    <property type="entry name" value="PRK00784.1"/>
    <property type="match status" value="1"/>
</dbReference>
<dbReference type="PANTHER" id="PTHR21343:SF1">
    <property type="entry name" value="COBYRIC ACID SYNTHASE"/>
    <property type="match status" value="1"/>
</dbReference>
<dbReference type="PANTHER" id="PTHR21343">
    <property type="entry name" value="DETHIOBIOTIN SYNTHETASE"/>
    <property type="match status" value="1"/>
</dbReference>
<dbReference type="Pfam" id="PF01656">
    <property type="entry name" value="CbiA"/>
    <property type="match status" value="1"/>
</dbReference>
<dbReference type="Pfam" id="PF07685">
    <property type="entry name" value="GATase_3"/>
    <property type="match status" value="1"/>
</dbReference>
<dbReference type="SUPFAM" id="SSF52317">
    <property type="entry name" value="Class I glutamine amidotransferase-like"/>
    <property type="match status" value="1"/>
</dbReference>
<dbReference type="SUPFAM" id="SSF52540">
    <property type="entry name" value="P-loop containing nucleoside triphosphate hydrolases"/>
    <property type="match status" value="1"/>
</dbReference>
<dbReference type="PROSITE" id="PS51274">
    <property type="entry name" value="GATASE_COBBQ"/>
    <property type="match status" value="1"/>
</dbReference>
<feature type="chain" id="PRO_0000332357" description="Cobyric acid synthase">
    <location>
        <begin position="1"/>
        <end position="491"/>
    </location>
</feature>
<feature type="domain" description="GATase cobBQ-type" evidence="1">
    <location>
        <begin position="246"/>
        <end position="432"/>
    </location>
</feature>
<feature type="active site" description="Nucleophile" evidence="1">
    <location>
        <position position="328"/>
    </location>
</feature>
<feature type="active site" evidence="1">
    <location>
        <position position="424"/>
    </location>
</feature>